<reference key="1">
    <citation type="submission" date="2009-05" db="EMBL/GenBank/DDBJ databases">
        <title>The genome sequence of Ajellomyces capsulatus strain H143.</title>
        <authorList>
            <person name="Champion M."/>
            <person name="Cuomo C.A."/>
            <person name="Ma L.-J."/>
            <person name="Henn M.R."/>
            <person name="Sil A."/>
            <person name="Goldman B."/>
            <person name="Young S.K."/>
            <person name="Kodira C.D."/>
            <person name="Zeng Q."/>
            <person name="Koehrsen M."/>
            <person name="Alvarado L."/>
            <person name="Berlin A.M."/>
            <person name="Borenstein D."/>
            <person name="Chen Z."/>
            <person name="Engels R."/>
            <person name="Freedman E."/>
            <person name="Gellesch M."/>
            <person name="Goldberg J."/>
            <person name="Griggs A."/>
            <person name="Gujja S."/>
            <person name="Heiman D.I."/>
            <person name="Hepburn T.A."/>
            <person name="Howarth C."/>
            <person name="Jen D."/>
            <person name="Larson L."/>
            <person name="Lewis B."/>
            <person name="Mehta T."/>
            <person name="Park D."/>
            <person name="Pearson M."/>
            <person name="Roberts A."/>
            <person name="Saif S."/>
            <person name="Shea T.D."/>
            <person name="Shenoy N."/>
            <person name="Sisk P."/>
            <person name="Stolte C."/>
            <person name="Sykes S."/>
            <person name="Walk T."/>
            <person name="White J."/>
            <person name="Yandava C."/>
            <person name="Klein B."/>
            <person name="McEwen J.G."/>
            <person name="Puccia R."/>
            <person name="Goldman G.H."/>
            <person name="Felipe M.S."/>
            <person name="Nino-Vega G."/>
            <person name="San-Blas G."/>
            <person name="Taylor J.W."/>
            <person name="Mendoza L."/>
            <person name="Galagan J.E."/>
            <person name="Nusbaum C."/>
            <person name="Birren B.W."/>
        </authorList>
    </citation>
    <scope>NUCLEOTIDE SEQUENCE [LARGE SCALE GENOMIC DNA]</scope>
    <source>
        <strain>H143</strain>
    </source>
</reference>
<keyword id="KW-0031">Aminopeptidase</keyword>
<keyword id="KW-0378">Hydrolase</keyword>
<keyword id="KW-0464">Manganese</keyword>
<keyword id="KW-0479">Metal-binding</keyword>
<keyword id="KW-0482">Metalloprotease</keyword>
<keyword id="KW-0645">Protease</keyword>
<keyword id="KW-1185">Reference proteome</keyword>
<dbReference type="EC" id="3.4.11.9"/>
<dbReference type="EMBL" id="GG692420">
    <property type="protein sequence ID" value="EER43448.1"/>
    <property type="molecule type" value="Genomic_DNA"/>
</dbReference>
<dbReference type="SMR" id="C6H7R7"/>
<dbReference type="STRING" id="544712.C6H7R7"/>
<dbReference type="VEuPathDB" id="FungiDB:HCDG_01478"/>
<dbReference type="eggNOG" id="KOG2737">
    <property type="taxonomic scope" value="Eukaryota"/>
</dbReference>
<dbReference type="HOGENOM" id="CLU_017266_1_2_1"/>
<dbReference type="OMA" id="DAHALFF"/>
<dbReference type="OrthoDB" id="1159at299071"/>
<dbReference type="Proteomes" id="UP000002624">
    <property type="component" value="Unassembled WGS sequence"/>
</dbReference>
<dbReference type="GO" id="GO:0030145">
    <property type="term" value="F:manganese ion binding"/>
    <property type="evidence" value="ECO:0007669"/>
    <property type="project" value="InterPro"/>
</dbReference>
<dbReference type="GO" id="GO:0070006">
    <property type="term" value="F:metalloaminopeptidase activity"/>
    <property type="evidence" value="ECO:0007669"/>
    <property type="project" value="InterPro"/>
</dbReference>
<dbReference type="GO" id="GO:0006508">
    <property type="term" value="P:proteolysis"/>
    <property type="evidence" value="ECO:0007669"/>
    <property type="project" value="UniProtKB-KW"/>
</dbReference>
<dbReference type="CDD" id="cd01087">
    <property type="entry name" value="Prolidase"/>
    <property type="match status" value="1"/>
</dbReference>
<dbReference type="FunFam" id="3.90.230.10:FF:000002">
    <property type="entry name" value="Xaa-Pro aminopeptidase 3"/>
    <property type="match status" value="1"/>
</dbReference>
<dbReference type="Gene3D" id="3.90.230.10">
    <property type="entry name" value="Creatinase/methionine aminopeptidase superfamily"/>
    <property type="match status" value="1"/>
</dbReference>
<dbReference type="Gene3D" id="3.40.350.10">
    <property type="entry name" value="Creatinase/prolidase N-terminal domain"/>
    <property type="match status" value="1"/>
</dbReference>
<dbReference type="InterPro" id="IPR007865">
    <property type="entry name" value="Aminopep_P_N"/>
</dbReference>
<dbReference type="InterPro" id="IPR029149">
    <property type="entry name" value="Creatin/AminoP/Spt16_N"/>
</dbReference>
<dbReference type="InterPro" id="IPR036005">
    <property type="entry name" value="Creatinase/aminopeptidase-like"/>
</dbReference>
<dbReference type="InterPro" id="IPR000994">
    <property type="entry name" value="Pept_M24"/>
</dbReference>
<dbReference type="InterPro" id="IPR052433">
    <property type="entry name" value="X-Pro_dipept-like"/>
</dbReference>
<dbReference type="PANTHER" id="PTHR43226">
    <property type="entry name" value="XAA-PRO AMINOPEPTIDASE 3"/>
    <property type="match status" value="1"/>
</dbReference>
<dbReference type="PANTHER" id="PTHR43226:SF1">
    <property type="entry name" value="XAA-PRO DIPEPTIDASE"/>
    <property type="match status" value="1"/>
</dbReference>
<dbReference type="Pfam" id="PF05195">
    <property type="entry name" value="AMP_N"/>
    <property type="match status" value="1"/>
</dbReference>
<dbReference type="Pfam" id="PF00557">
    <property type="entry name" value="Peptidase_M24"/>
    <property type="match status" value="1"/>
</dbReference>
<dbReference type="SMART" id="SM01011">
    <property type="entry name" value="AMP_N"/>
    <property type="match status" value="1"/>
</dbReference>
<dbReference type="SUPFAM" id="SSF55920">
    <property type="entry name" value="Creatinase/aminopeptidase"/>
    <property type="match status" value="1"/>
</dbReference>
<dbReference type="SUPFAM" id="SSF53092">
    <property type="entry name" value="Creatinase/prolidase N-terminal domain"/>
    <property type="match status" value="1"/>
</dbReference>
<organism>
    <name type="scientific">Ajellomyces capsulatus (strain H143)</name>
    <name type="common">Darling's disease fungus</name>
    <name type="synonym">Histoplasma capsulatum</name>
    <dbReference type="NCBI Taxonomy" id="544712"/>
    <lineage>
        <taxon>Eukaryota</taxon>
        <taxon>Fungi</taxon>
        <taxon>Dikarya</taxon>
        <taxon>Ascomycota</taxon>
        <taxon>Pezizomycotina</taxon>
        <taxon>Eurotiomycetes</taxon>
        <taxon>Eurotiomycetidae</taxon>
        <taxon>Onygenales</taxon>
        <taxon>Ajellomycetaceae</taxon>
        <taxon>Histoplasma</taxon>
    </lineage>
</organism>
<comment type="function">
    <text evidence="1">Catalyzes the removal of a penultimate prolyl residue from the N-termini of peptides.</text>
</comment>
<comment type="catalytic activity">
    <reaction>
        <text>Release of any N-terminal amino acid, including proline, that is linked to proline, even from a dipeptide or tripeptide.</text>
        <dbReference type="EC" id="3.4.11.9"/>
    </reaction>
</comment>
<comment type="cofactor">
    <cofactor evidence="1">
        <name>Mn(2+)</name>
        <dbReference type="ChEBI" id="CHEBI:29035"/>
    </cofactor>
    <text evidence="1">Binds 2 manganese ions per subunit.</text>
</comment>
<comment type="similarity">
    <text evidence="2">Belongs to the peptidase M24B family.</text>
</comment>
<evidence type="ECO:0000250" key="1"/>
<evidence type="ECO:0000305" key="2"/>
<accession>C6H7R7</accession>
<proteinExistence type="inferred from homology"/>
<feature type="chain" id="PRO_0000411859" description="Probable Xaa-Pro aminopeptidase PEPP">
    <location>
        <begin position="1"/>
        <end position="469"/>
    </location>
</feature>
<feature type="binding site" evidence="1">
    <location>
        <position position="264"/>
    </location>
    <ligand>
        <name>Mn(2+)</name>
        <dbReference type="ChEBI" id="CHEBI:29035"/>
        <label>2</label>
    </ligand>
</feature>
<feature type="binding site" evidence="1">
    <location>
        <position position="275"/>
    </location>
    <ligand>
        <name>Mn(2+)</name>
        <dbReference type="ChEBI" id="CHEBI:29035"/>
        <label>1</label>
    </ligand>
</feature>
<feature type="binding site" evidence="1">
    <location>
        <position position="275"/>
    </location>
    <ligand>
        <name>Mn(2+)</name>
        <dbReference type="ChEBI" id="CHEBI:29035"/>
        <label>2</label>
    </ligand>
</feature>
<feature type="binding site" evidence="1">
    <location>
        <position position="398"/>
    </location>
    <ligand>
        <name>Mn(2+)</name>
        <dbReference type="ChEBI" id="CHEBI:29035"/>
        <label>1</label>
    </ligand>
</feature>
<feature type="binding site" evidence="1">
    <location>
        <position position="438"/>
    </location>
    <ligand>
        <name>Mn(2+)</name>
        <dbReference type="ChEBI" id="CHEBI:29035"/>
        <label>1</label>
    </ligand>
</feature>
<feature type="binding site" evidence="1">
    <location>
        <position position="438"/>
    </location>
    <ligand>
        <name>Mn(2+)</name>
        <dbReference type="ChEBI" id="CHEBI:29035"/>
        <label>2</label>
    </ligand>
</feature>
<protein>
    <recommendedName>
        <fullName>Probable Xaa-Pro aminopeptidase PEPP</fullName>
        <ecNumber>3.4.11.9</ecNumber>
    </recommendedName>
    <alternativeName>
        <fullName>Aminoacylproline aminopeptidase</fullName>
    </alternativeName>
    <alternativeName>
        <fullName>Prolidase</fullName>
    </alternativeName>
</protein>
<gene>
    <name type="primary">PEPP</name>
    <name type="ORF">HCDG_01478</name>
</gene>
<sequence>MDESVDRVLAGKYPAKAHAKRVAARIRELGYGESGVIYLEGQKTQMIEDNDGSMPFRQRRNFFYLSGCPLPDSYLTYNIEEDHLTLFIPPIDEDSVIWSGLPLSPDEALEMYDVDAVLLTTDVNTSLAHFCSVKKGKKVFALADQVSPHITFLPFQETDFDVLKRAAEESRVVKDTYEIALLRRANEISTKAHVAVIKAARSAANERELEAIFIATCMSYGCREQSYHPIFASGTNAATLHYQNNNEDLVDKTTGEKRLNMLVDAGGEYRTYCADITRVVPLSGKFSAESRQIYDIVLDMQMTSLAMIRAGVMWEDVHSNSHRVAIRGLLKLGILRGTEEELFDKGISVAFFPHGVGHYLGMDTHDTGGNPNYEDENPKFKYLRLRGTLACGAVVTVEPGIYFCRFIIDPYLASPELGKYIDTNVLERYWNVGGVRIEDNVVVTQNGHDNLTAAPKIPEEIEKLVAATQ</sequence>
<name>AMPP3_AJECH</name>